<keyword id="KW-0067">ATP-binding</keyword>
<keyword id="KW-0997">Cell inner membrane</keyword>
<keyword id="KW-1003">Cell membrane</keyword>
<keyword id="KW-0406">Ion transport</keyword>
<keyword id="KW-0472">Membrane</keyword>
<keyword id="KW-0547">Nucleotide-binding</keyword>
<keyword id="KW-0630">Potassium</keyword>
<keyword id="KW-0633">Potassium transport</keyword>
<keyword id="KW-0812">Transmembrane</keyword>
<keyword id="KW-1133">Transmembrane helix</keyword>
<keyword id="KW-0813">Transport</keyword>
<evidence type="ECO:0000255" key="1">
    <source>
        <dbReference type="HAMAP-Rule" id="MF_00276"/>
    </source>
</evidence>
<proteinExistence type="inferred from homology"/>
<protein>
    <recommendedName>
        <fullName evidence="1">Potassium-transporting ATPase KdpC subunit</fullName>
    </recommendedName>
    <alternativeName>
        <fullName evidence="1">ATP phosphohydrolase [potassium-transporting] C chain</fullName>
    </alternativeName>
    <alternativeName>
        <fullName evidence="1">Potassium-binding and translocating subunit C</fullName>
    </alternativeName>
    <alternativeName>
        <fullName evidence="1">Potassium-translocating ATPase C chain</fullName>
    </alternativeName>
</protein>
<sequence length="187" mass="19573">MLKQIRPAIVMIVFFTVLTGLVYPLGMTGIAQALFPRQANGSLIEKDGKVIGSELIGQAFASDKYFHGRPSAAGNGYDAGASGGSNLGPTNPKLIERIKGGAEKLKAENPNQPVPMDLVTTSGSGLDPQISPEAAYFQVPRVAKARGIDEAKVKALVDGQVEGRELGFMGEPVVNVLALNLALDAAK</sequence>
<reference key="1">
    <citation type="journal article" date="2000" name="DNA Res.">
        <title>Complete genome structure of the nitrogen-fixing symbiotic bacterium Mesorhizobium loti.</title>
        <authorList>
            <person name="Kaneko T."/>
            <person name="Nakamura Y."/>
            <person name="Sato S."/>
            <person name="Asamizu E."/>
            <person name="Kato T."/>
            <person name="Sasamoto S."/>
            <person name="Watanabe A."/>
            <person name="Idesawa K."/>
            <person name="Ishikawa A."/>
            <person name="Kawashima K."/>
            <person name="Kimura T."/>
            <person name="Kishida Y."/>
            <person name="Kiyokawa C."/>
            <person name="Kohara M."/>
            <person name="Matsumoto M."/>
            <person name="Matsuno A."/>
            <person name="Mochizuki Y."/>
            <person name="Nakayama S."/>
            <person name="Nakazaki N."/>
            <person name="Shimpo S."/>
            <person name="Sugimoto M."/>
            <person name="Takeuchi C."/>
            <person name="Yamada M."/>
            <person name="Tabata S."/>
        </authorList>
    </citation>
    <scope>NUCLEOTIDE SEQUENCE [LARGE SCALE GENOMIC DNA]</scope>
    <source>
        <strain>LMG 29417 / CECT 9101 / MAFF 303099</strain>
    </source>
</reference>
<organism>
    <name type="scientific">Mesorhizobium japonicum (strain LMG 29417 / CECT 9101 / MAFF 303099)</name>
    <name type="common">Mesorhizobium loti (strain MAFF 303099)</name>
    <dbReference type="NCBI Taxonomy" id="266835"/>
    <lineage>
        <taxon>Bacteria</taxon>
        <taxon>Pseudomonadati</taxon>
        <taxon>Pseudomonadota</taxon>
        <taxon>Alphaproteobacteria</taxon>
        <taxon>Hyphomicrobiales</taxon>
        <taxon>Phyllobacteriaceae</taxon>
        <taxon>Mesorhizobium</taxon>
    </lineage>
</organism>
<comment type="function">
    <text evidence="1">Part of the high-affinity ATP-driven potassium transport (or Kdp) system, which catalyzes the hydrolysis of ATP coupled with the electrogenic transport of potassium into the cytoplasm. This subunit acts as a catalytic chaperone that increases the ATP-binding affinity of the ATP-hydrolyzing subunit KdpB by the formation of a transient KdpB/KdpC/ATP ternary complex.</text>
</comment>
<comment type="subunit">
    <text evidence="1">The system is composed of three essential subunits: KdpA, KdpB and KdpC.</text>
</comment>
<comment type="subcellular location">
    <subcellularLocation>
        <location evidence="1">Cell inner membrane</location>
        <topology evidence="1">Single-pass membrane protein</topology>
    </subcellularLocation>
</comment>
<comment type="similarity">
    <text evidence="1">Belongs to the KdpC family.</text>
</comment>
<feature type="chain" id="PRO_0000197005" description="Potassium-transporting ATPase KdpC subunit">
    <location>
        <begin position="1"/>
        <end position="187"/>
    </location>
</feature>
<feature type="transmembrane region" description="Helical" evidence="1">
    <location>
        <begin position="7"/>
        <end position="27"/>
    </location>
</feature>
<gene>
    <name evidence="1" type="primary">kdpC</name>
    <name type="ordered locus">mll3129</name>
</gene>
<name>KDPC_RHILO</name>
<dbReference type="EMBL" id="BA000012">
    <property type="protein sequence ID" value="BAB50089.1"/>
    <property type="molecule type" value="Genomic_DNA"/>
</dbReference>
<dbReference type="RefSeq" id="WP_010911436.1">
    <property type="nucleotide sequence ID" value="NC_002678.2"/>
</dbReference>
<dbReference type="SMR" id="Q98GX7"/>
<dbReference type="KEGG" id="mlo:mll3129"/>
<dbReference type="PATRIC" id="fig|266835.9.peg.2494"/>
<dbReference type="eggNOG" id="COG2156">
    <property type="taxonomic scope" value="Bacteria"/>
</dbReference>
<dbReference type="HOGENOM" id="CLU_077094_2_0_5"/>
<dbReference type="Proteomes" id="UP000000552">
    <property type="component" value="Chromosome"/>
</dbReference>
<dbReference type="GO" id="GO:0005886">
    <property type="term" value="C:plasma membrane"/>
    <property type="evidence" value="ECO:0007669"/>
    <property type="project" value="UniProtKB-SubCell"/>
</dbReference>
<dbReference type="GO" id="GO:0005524">
    <property type="term" value="F:ATP binding"/>
    <property type="evidence" value="ECO:0007669"/>
    <property type="project" value="UniProtKB-UniRule"/>
</dbReference>
<dbReference type="GO" id="GO:0008556">
    <property type="term" value="F:P-type potassium transmembrane transporter activity"/>
    <property type="evidence" value="ECO:0007669"/>
    <property type="project" value="InterPro"/>
</dbReference>
<dbReference type="HAMAP" id="MF_00276">
    <property type="entry name" value="KdpC"/>
    <property type="match status" value="1"/>
</dbReference>
<dbReference type="InterPro" id="IPR003820">
    <property type="entry name" value="KdpC"/>
</dbReference>
<dbReference type="NCBIfam" id="TIGR00681">
    <property type="entry name" value="kdpC"/>
    <property type="match status" value="1"/>
</dbReference>
<dbReference type="NCBIfam" id="NF001454">
    <property type="entry name" value="PRK00315.1"/>
    <property type="match status" value="1"/>
</dbReference>
<dbReference type="PANTHER" id="PTHR30042">
    <property type="entry name" value="POTASSIUM-TRANSPORTING ATPASE C CHAIN"/>
    <property type="match status" value="1"/>
</dbReference>
<dbReference type="PANTHER" id="PTHR30042:SF2">
    <property type="entry name" value="POTASSIUM-TRANSPORTING ATPASE KDPC SUBUNIT"/>
    <property type="match status" value="1"/>
</dbReference>
<dbReference type="Pfam" id="PF02669">
    <property type="entry name" value="KdpC"/>
    <property type="match status" value="1"/>
</dbReference>
<dbReference type="PIRSF" id="PIRSF001296">
    <property type="entry name" value="K_ATPase_KdpC"/>
    <property type="match status" value="1"/>
</dbReference>
<accession>Q98GX7</accession>